<accession>Q9FAD7</accession>
<proteinExistence type="inferred from homology"/>
<reference key="1">
    <citation type="journal article" date="2001" name="Biosci. Biotechnol. Biochem.">
        <title>Isolation and characterization of the Enterobacter cloacae cheR mutant defective in phosphate taxis.</title>
        <authorList>
            <person name="Kato J."/>
            <person name="Nagata C."/>
            <person name="Yang L."/>
            <person name="Kuroda A."/>
            <person name="Ikeda T."/>
            <person name="Takiguchi N."/>
            <person name="Ohtake H."/>
        </authorList>
    </citation>
    <scope>NUCLEOTIDE SEQUENCE [GENOMIC DNA]</scope>
    <source>
        <strain>ATCC 7256 / NBRC 3320</strain>
    </source>
</reference>
<dbReference type="EMBL" id="AB040876">
    <property type="protein sequence ID" value="BAB15841.1"/>
    <property type="molecule type" value="Genomic_DNA"/>
</dbReference>
<dbReference type="RefSeq" id="WP_008500431.1">
    <property type="nucleotide sequence ID" value="NZ_WNXG01000101.1"/>
</dbReference>
<dbReference type="SMR" id="Q9FAD7"/>
<dbReference type="GeneID" id="97446028"/>
<dbReference type="eggNOG" id="COG0745">
    <property type="taxonomic scope" value="Bacteria"/>
</dbReference>
<dbReference type="OMA" id="AAGAHEY"/>
<dbReference type="GO" id="GO:0005737">
    <property type="term" value="C:cytoplasm"/>
    <property type="evidence" value="ECO:0007669"/>
    <property type="project" value="UniProtKB-SubCell"/>
</dbReference>
<dbReference type="GO" id="GO:0046872">
    <property type="term" value="F:metal ion binding"/>
    <property type="evidence" value="ECO:0007669"/>
    <property type="project" value="UniProtKB-KW"/>
</dbReference>
<dbReference type="GO" id="GO:0097588">
    <property type="term" value="P:archaeal or bacterial-type flagellum-dependent cell motility"/>
    <property type="evidence" value="ECO:0007669"/>
    <property type="project" value="UniProtKB-KW"/>
</dbReference>
<dbReference type="GO" id="GO:0006935">
    <property type="term" value="P:chemotaxis"/>
    <property type="evidence" value="ECO:0007669"/>
    <property type="project" value="UniProtKB-KW"/>
</dbReference>
<dbReference type="GO" id="GO:0000160">
    <property type="term" value="P:phosphorelay signal transduction system"/>
    <property type="evidence" value="ECO:0007669"/>
    <property type="project" value="UniProtKB-KW"/>
</dbReference>
<dbReference type="CDD" id="cd19923">
    <property type="entry name" value="REC_CheY_CheY3"/>
    <property type="match status" value="1"/>
</dbReference>
<dbReference type="FunFam" id="3.40.50.2300:FF:000019">
    <property type="entry name" value="Chemotaxis response regulator CheY"/>
    <property type="match status" value="1"/>
</dbReference>
<dbReference type="Gene3D" id="3.40.50.2300">
    <property type="match status" value="1"/>
</dbReference>
<dbReference type="InterPro" id="IPR011006">
    <property type="entry name" value="CheY-like_superfamily"/>
</dbReference>
<dbReference type="InterPro" id="IPR001789">
    <property type="entry name" value="Sig_transdc_resp-reg_receiver"/>
</dbReference>
<dbReference type="InterPro" id="IPR052048">
    <property type="entry name" value="ST_Response_Regulator"/>
</dbReference>
<dbReference type="NCBIfam" id="NF007901">
    <property type="entry name" value="PRK10610.1"/>
    <property type="match status" value="1"/>
</dbReference>
<dbReference type="PANTHER" id="PTHR43228">
    <property type="entry name" value="TWO-COMPONENT RESPONSE REGULATOR"/>
    <property type="match status" value="1"/>
</dbReference>
<dbReference type="PANTHER" id="PTHR43228:SF1">
    <property type="entry name" value="TWO-COMPONENT RESPONSE REGULATOR ARR22"/>
    <property type="match status" value="1"/>
</dbReference>
<dbReference type="Pfam" id="PF00072">
    <property type="entry name" value="Response_reg"/>
    <property type="match status" value="1"/>
</dbReference>
<dbReference type="SMART" id="SM00448">
    <property type="entry name" value="REC"/>
    <property type="match status" value="1"/>
</dbReference>
<dbReference type="SUPFAM" id="SSF52172">
    <property type="entry name" value="CheY-like"/>
    <property type="match status" value="1"/>
</dbReference>
<dbReference type="PROSITE" id="PS50110">
    <property type="entry name" value="RESPONSE_REGULATORY"/>
    <property type="match status" value="1"/>
</dbReference>
<evidence type="ECO:0000250" key="1"/>
<evidence type="ECO:0000250" key="2">
    <source>
        <dbReference type="UniProtKB" id="A0A0H3AMJ9"/>
    </source>
</evidence>
<evidence type="ECO:0000250" key="3">
    <source>
        <dbReference type="UniProtKB" id="P0AE67"/>
    </source>
</evidence>
<evidence type="ECO:0000255" key="4">
    <source>
        <dbReference type="PROSITE-ProRule" id="PRU00169"/>
    </source>
</evidence>
<evidence type="ECO:0000305" key="5"/>
<comment type="function">
    <text evidence="3">Involved in the transmission of sensory signals from the chemoreceptors to the flagellar motors. In its active (phosphorylated or acetylated) form, CheY exhibits enhanced binding to a switch component, FliM, at the flagellar motor which induces a change from counterclockwise to clockwise flagellar rotation (By similarity).</text>
</comment>
<comment type="cofactor">
    <cofactor evidence="3">
        <name>Mg(2+)</name>
        <dbReference type="ChEBI" id="CHEBI:18420"/>
    </cofactor>
    <text evidence="3">Binds 1 Mg(2+) ion per subunit.</text>
</comment>
<comment type="subcellular location">
    <subcellularLocation>
        <location evidence="5">Cytoplasm</location>
    </subcellularLocation>
</comment>
<comment type="PTM">
    <text evidence="3">Phosphorylated by CheA or acetylated by acetyl-CoA synthetase, depending on which acetate metabolism pathway is available.</text>
</comment>
<gene>
    <name type="primary">cheY</name>
</gene>
<keyword id="KW-0007">Acetylation</keyword>
<keyword id="KW-0145">Chemotaxis</keyword>
<keyword id="KW-0963">Cytoplasm</keyword>
<keyword id="KW-0283">Flagellar rotation</keyword>
<keyword id="KW-0460">Magnesium</keyword>
<keyword id="KW-0479">Metal-binding</keyword>
<keyword id="KW-0597">Phosphoprotein</keyword>
<keyword id="KW-0902">Two-component regulatory system</keyword>
<name>CHEY_ENTCL</name>
<sequence length="129" mass="14042">MADKELKFLVVDDFSTMRRIVRNLLKELGFNNVEEAEDGVDALNKLQAGGFGFVISDWNMPNMDGLELLKTIRADAGMASMPVLMVTAEAKKENIIAAAQAGASGYVVKPFTAATLEEKLGKIFEKLGM</sequence>
<organism>
    <name type="scientific">Enterobacter cloacae</name>
    <dbReference type="NCBI Taxonomy" id="550"/>
    <lineage>
        <taxon>Bacteria</taxon>
        <taxon>Pseudomonadati</taxon>
        <taxon>Pseudomonadota</taxon>
        <taxon>Gammaproteobacteria</taxon>
        <taxon>Enterobacterales</taxon>
        <taxon>Enterobacteriaceae</taxon>
        <taxon>Enterobacter</taxon>
        <taxon>Enterobacter cloacae complex</taxon>
    </lineage>
</organism>
<feature type="initiator methionine" description="Removed" evidence="1">
    <location>
        <position position="1"/>
    </location>
</feature>
<feature type="chain" id="PRO_0000081043" description="Chemotaxis protein CheY">
    <location>
        <begin position="2"/>
        <end position="129"/>
    </location>
</feature>
<feature type="domain" description="Response regulatory" evidence="4">
    <location>
        <begin position="7"/>
        <end position="124"/>
    </location>
</feature>
<feature type="binding site" evidence="2">
    <location>
        <position position="12"/>
    </location>
    <ligand>
        <name>Mg(2+)</name>
        <dbReference type="ChEBI" id="CHEBI:18420"/>
    </ligand>
</feature>
<feature type="binding site" evidence="3">
    <location>
        <position position="13"/>
    </location>
    <ligand>
        <name>Mg(2+)</name>
        <dbReference type="ChEBI" id="CHEBI:18420"/>
    </ligand>
</feature>
<feature type="binding site" evidence="3">
    <location>
        <position position="57"/>
    </location>
    <ligand>
        <name>Mg(2+)</name>
        <dbReference type="ChEBI" id="CHEBI:18420"/>
    </ligand>
</feature>
<feature type="binding site" evidence="3">
    <location>
        <position position="59"/>
    </location>
    <ligand>
        <name>Mg(2+)</name>
        <dbReference type="ChEBI" id="CHEBI:18420"/>
    </ligand>
</feature>
<feature type="modified residue" description="4-aspartylphosphate" evidence="4">
    <location>
        <position position="57"/>
    </location>
</feature>
<feature type="modified residue" description="N6-acetyllysine" evidence="1">
    <location>
        <position position="92"/>
    </location>
</feature>
<feature type="modified residue" description="N6-acetyllysine" evidence="1">
    <location>
        <position position="109"/>
    </location>
</feature>
<protein>
    <recommendedName>
        <fullName>Chemotaxis protein CheY</fullName>
    </recommendedName>
</protein>